<dbReference type="EMBL" id="AE009950">
    <property type="protein sequence ID" value="AAL80247.1"/>
    <property type="molecule type" value="Genomic_DNA"/>
</dbReference>
<dbReference type="RefSeq" id="WP_011011235.1">
    <property type="nucleotide sequence ID" value="NZ_CP023154.1"/>
</dbReference>
<dbReference type="SMR" id="Q8U4G5"/>
<dbReference type="STRING" id="186497.PF0123"/>
<dbReference type="PaxDb" id="186497-PF0123"/>
<dbReference type="DNASU" id="1467952"/>
<dbReference type="KEGG" id="pfu:PF0123"/>
<dbReference type="PATRIC" id="fig|186497.12.peg.128"/>
<dbReference type="eggNOG" id="arCOG04385">
    <property type="taxonomic scope" value="Archaea"/>
</dbReference>
<dbReference type="HOGENOM" id="CLU_148458_0_0_2"/>
<dbReference type="OrthoDB" id="59816at2157"/>
<dbReference type="PhylomeDB" id="Q8U4G5"/>
<dbReference type="Proteomes" id="UP000001013">
    <property type="component" value="Chromosome"/>
</dbReference>
<dbReference type="Gene3D" id="3.40.50.150">
    <property type="entry name" value="Vaccinia Virus protein VP39"/>
    <property type="match status" value="1"/>
</dbReference>
<dbReference type="HAMAP" id="MF_00341">
    <property type="entry name" value="UPF0146"/>
    <property type="match status" value="1"/>
</dbReference>
<dbReference type="InterPro" id="IPR036291">
    <property type="entry name" value="NAD(P)-bd_dom_sf"/>
</dbReference>
<dbReference type="InterPro" id="IPR029063">
    <property type="entry name" value="SAM-dependent_MTases_sf"/>
</dbReference>
<dbReference type="InterPro" id="IPR005353">
    <property type="entry name" value="UPF0146"/>
</dbReference>
<dbReference type="NCBIfam" id="NF003165">
    <property type="entry name" value="PRK04148.1"/>
    <property type="match status" value="1"/>
</dbReference>
<dbReference type="Pfam" id="PF03686">
    <property type="entry name" value="UPF0146"/>
    <property type="match status" value="1"/>
</dbReference>
<dbReference type="PIRSF" id="PIRSF016725">
    <property type="entry name" value="UCP016725"/>
    <property type="match status" value="1"/>
</dbReference>
<dbReference type="SUPFAM" id="SSF51735">
    <property type="entry name" value="NAD(P)-binding Rossmann-fold domains"/>
    <property type="match status" value="1"/>
</dbReference>
<evidence type="ECO:0000255" key="1">
    <source>
        <dbReference type="HAMAP-Rule" id="MF_00341"/>
    </source>
</evidence>
<gene>
    <name type="ordered locus">PF0123</name>
</gene>
<comment type="similarity">
    <text evidence="1">Belongs to the UPF0146 family.</text>
</comment>
<proteinExistence type="inferred from homology"/>
<reference key="1">
    <citation type="journal article" date="1999" name="Genetics">
        <title>Divergence of the hyperthermophilic archaea Pyrococcus furiosus and P. horikoshii inferred from complete genomic sequences.</title>
        <authorList>
            <person name="Maeder D.L."/>
            <person name="Weiss R.B."/>
            <person name="Dunn D.M."/>
            <person name="Cherry J.L."/>
            <person name="Gonzalez J.M."/>
            <person name="DiRuggiero J."/>
            <person name="Robb F.T."/>
        </authorList>
    </citation>
    <scope>NUCLEOTIDE SEQUENCE [LARGE SCALE GENOMIC DNA]</scope>
    <source>
        <strain>ATCC 43587 / DSM 3638 / JCM 8422 / Vc1</strain>
    </source>
</reference>
<protein>
    <recommendedName>
        <fullName evidence="1">UPF0146 protein PF0123</fullName>
    </recommendedName>
</protein>
<feature type="chain" id="PRO_0000145097" description="UPF0146 protein PF0123">
    <location>
        <begin position="1"/>
        <end position="132"/>
    </location>
</feature>
<sequence length="132" mass="14956">MEALAELIKRKVPNEGLIIEVGVGFYLKVAKKLKEYGFNVVVVDINQEAVKNAIKERIPGFVDDVFNPNLKIYLKARAIYSIRPNPEIMMALLTLAKKVKVPLYIVPLSGDVPPREMKLINYKGISVYVWEP</sequence>
<organism>
    <name type="scientific">Pyrococcus furiosus (strain ATCC 43587 / DSM 3638 / JCM 8422 / Vc1)</name>
    <dbReference type="NCBI Taxonomy" id="186497"/>
    <lineage>
        <taxon>Archaea</taxon>
        <taxon>Methanobacteriati</taxon>
        <taxon>Methanobacteriota</taxon>
        <taxon>Thermococci</taxon>
        <taxon>Thermococcales</taxon>
        <taxon>Thermococcaceae</taxon>
        <taxon>Pyrococcus</taxon>
    </lineage>
</organism>
<name>Y123_PYRFU</name>
<keyword id="KW-1185">Reference proteome</keyword>
<accession>Q8U4G5</accession>